<organism>
    <name type="scientific">Mus musculus</name>
    <name type="common">Mouse</name>
    <dbReference type="NCBI Taxonomy" id="10090"/>
    <lineage>
        <taxon>Eukaryota</taxon>
        <taxon>Metazoa</taxon>
        <taxon>Chordata</taxon>
        <taxon>Craniata</taxon>
        <taxon>Vertebrata</taxon>
        <taxon>Euteleostomi</taxon>
        <taxon>Mammalia</taxon>
        <taxon>Eutheria</taxon>
        <taxon>Euarchontoglires</taxon>
        <taxon>Glires</taxon>
        <taxon>Rodentia</taxon>
        <taxon>Myomorpha</taxon>
        <taxon>Muroidea</taxon>
        <taxon>Muridae</taxon>
        <taxon>Murinae</taxon>
        <taxon>Mus</taxon>
        <taxon>Mus</taxon>
    </lineage>
</organism>
<name>THS7A_MOUSE</name>
<evidence type="ECO:0000250" key="1">
    <source>
        <dbReference type="UniProtKB" id="Q9UPZ6"/>
    </source>
</evidence>
<evidence type="ECO:0000255" key="2"/>
<evidence type="ECO:0000255" key="3">
    <source>
        <dbReference type="PROSITE-ProRule" id="PRU00210"/>
    </source>
</evidence>
<evidence type="ECO:0000256" key="4">
    <source>
        <dbReference type="SAM" id="MobiDB-lite"/>
    </source>
</evidence>
<evidence type="ECO:0000269" key="5">
    <source>
    </source>
</evidence>
<evidence type="ECO:0000305" key="6"/>
<evidence type="ECO:0000305" key="7">
    <source>
    </source>
</evidence>
<protein>
    <recommendedName>
        <fullName>Thrombospondin type-1 domain-containing protein 7A</fullName>
    </recommendedName>
    <component>
        <recommendedName>
            <fullName>Thrombospondin type-1 domain-containing protein 7A, soluble form</fullName>
        </recommendedName>
    </component>
</protein>
<proteinExistence type="evidence at protein level"/>
<sequence>MGLRAGRLASPSRGVLQLLRLPLLLLLLLSSGARGAAAQGDTEVPTLYLWKTGPWGRCMGDDCGPGGIQTRAVWCAHVEGWTTLHTNCKQAVRPSNQQNCFKVCDWHKELYDWRLGTWDRCQPVISKSLEKSRECVKGEEGIQVREIMCIQKDKDIPAEDIICEYFEPKPLLEQACLIPCQKDCIVSEFSPWSECSRTCGSGLQHRTRHVVAPPQYGGSGCPNLTEFQVCQSNPCEEDESLYSLQVGPWSACSVPHTRQARQARRRGKNKEREKERGKAVKDPEARELIKKKRNRNRQNRQENRYWDIQIGYQTRDVTCLNRTGKSADLSFCQQERLPMTFQSCVITKECQVSEWLEWSPCSKTCHDVTSPTGTRVRTRTITQFPIGSEKECPALEEKEPCVSQGDGAVLCATYGWRTTEWTECHVDPLLSQQDKRRANQTALCGGGVQTREIYCIQTNDNMLSHGNTQKDKEASKPVDSKLCTGPVPNTTQLCHVPCPIECEVSPWSAWGPCTYENCNDQQGKKGFKLRKRRITNEPTGGSGATGNCPHLLEAIPCEEPSCYDWKSVRLGDCEPDNGKSCGPGTQVQEVVCINSDGEEVDRQLCRDAIFPIPVACDAPCPKDCVLSAWSSWSSCSHTCSGKTTEGKQTRARSILAYAGEEGGIRCPNISALQEVRSCNEHPCTVYHWQTGPWGQCIEDTSVSSFNTTTTWNGEASCSVGMQTRKVICVRVNVGQVGPKKCPESLRPETVRPCLLPCRKDCVVTPYSDWTPCPSSCREGDSGARKQSRQRVIIQLPANGGKECSDPLYEEKACEAPPTCHSYRWKTHKWRRCQLVPWSIQQDVPGAQEGCGPGRQARAITCRKQDGGQASIQECLQYAGPVPALTQACQIPCQDDCQFTSWSKFSSCNGDCGAVRTRKRAIVGKSKKKEKCKNSHLYPLIETQYCPCDKYNAQPVGNWSDCILPEGKAEVLLGMKVQGDSKECGQGYRYQAMACYDQNGRLVETSRCNSHGYIEEACIIPCPSDCKLSEWSNWSRCSKSCGSGVKVRSKWLREKPYNGGRPCPKLDHVNQAQVYEVVPCHSDCNQYIWVTEPWSVCKVTFVDMRDNCGEGVQTRKVRCMQNTADGPSEHVEDYLCDPEDMPLGSRECKLPCPEDCVISEWGPWTCALPCNPSGSRQRSADPIRQPADEGRACPDAVEKEPCSLNKNCYHYDYNVTDWSTCQLSEKAVCGNGIKTRMLDCVRSDGKSVDLKYCEELGLEKNWPMNTSCTVECPVNCQLSDWSSWSQCSQTCGLTGKMIRKRTVTQPFQGDGRPCPSLMEQSKPCPVKPCYRWQYGQWSPCQVQEAQCGEGTRTRNISCVVSDGSAEDFSKVVDEEFCANTELIIDGNKQIVLEETCTQPCPGDCYLNDWSSWSLCQLTCVNGEDLGFGGIQVRSRAVIIQELENQHLCPEQMLETKSCDDGQCYEYKWVASAWKGSSRTVWCQRSDGINVTGGCLVVSQPDTDRSCNPPCSQPHSYCSEMKTCRCEEGYTEVMSSNSTLEQCTLIPVVVIPTVEDKRGDVKTSRAVHPTQPSINPAGRGRTWFLQPFGPDGRLKTWVYGVAAGAFVLLVFIVSMIYLACKKPKKPQRRQNNRLKPLTLAYDGDADM</sequence>
<feature type="signal peptide" evidence="2">
    <location>
        <begin position="1"/>
        <end position="38"/>
    </location>
</feature>
<feature type="chain" id="PRO_0000256127" description="Thrombospondin type-1 domain-containing protein 7A">
    <location>
        <begin position="39"/>
        <end position="1645"/>
    </location>
</feature>
<feature type="chain" id="PRO_0000444431" description="Thrombospondin type-1 domain-containing protein 7A, soluble form">
    <location>
        <begin position="39"/>
        <end status="unknown"/>
    </location>
</feature>
<feature type="topological domain" description="Extracellular" evidence="2">
    <location>
        <begin position="39"/>
        <end position="1595"/>
    </location>
</feature>
<feature type="transmembrane region" description="Helical" evidence="2">
    <location>
        <begin position="1596"/>
        <end position="1616"/>
    </location>
</feature>
<feature type="topological domain" description="Cytoplasmic" evidence="2">
    <location>
        <begin position="1617"/>
        <end position="1645"/>
    </location>
</feature>
<feature type="domain" description="TSP type-1 1" evidence="3">
    <location>
        <begin position="46"/>
        <end position="105"/>
    </location>
</feature>
<feature type="domain" description="TSP type-1 2" evidence="2">
    <location>
        <begin position="109"/>
        <end position="181"/>
    </location>
</feature>
<feature type="domain" description="TSP type-1 3" evidence="3">
    <location>
        <begin position="183"/>
        <end position="236"/>
    </location>
</feature>
<feature type="domain" description="TSP type-1 4" evidence="3">
    <location>
        <begin position="349"/>
        <end position="405"/>
    </location>
</feature>
<feature type="domain" description="TSP type-1 5" evidence="3">
    <location>
        <begin position="412"/>
        <end position="499"/>
    </location>
</feature>
<feature type="domain" description="TSP type-1 6" evidence="3">
    <location>
        <begin position="501"/>
        <end position="563"/>
    </location>
</feature>
<feature type="domain" description="TSP type-1 7" evidence="3">
    <location>
        <begin position="623"/>
        <end position="684"/>
    </location>
</feature>
<feature type="domain" description="TSP type-1 8" evidence="3">
    <location>
        <begin position="685"/>
        <end position="758"/>
    </location>
</feature>
<feature type="domain" description="TSP type-1 9" evidence="3">
    <location>
        <begin position="760"/>
        <end position="820"/>
    </location>
</feature>
<feature type="domain" description="TSP type-1 10" evidence="2">
    <location>
        <begin position="821"/>
        <end position="893"/>
    </location>
</feature>
<feature type="domain" description="TSP type-1 11" evidence="3">
    <location>
        <begin position="895"/>
        <end position="948"/>
    </location>
</feature>
<feature type="domain" description="TSP type-1 12" evidence="3">
    <location>
        <begin position="949"/>
        <end position="1022"/>
    </location>
</feature>
<feature type="domain" description="TSP type-1 13" evidence="3">
    <location>
        <begin position="1024"/>
        <end position="1084"/>
    </location>
</feature>
<feature type="domain" description="TSP type-1 14" evidence="2">
    <location>
        <begin position="1085"/>
        <end position="1152"/>
    </location>
</feature>
<feature type="domain" description="TSP type-1 15" evidence="2">
    <location>
        <begin position="1154"/>
        <end position="1208"/>
    </location>
</feature>
<feature type="domain" description="TSP type-1 16" evidence="3">
    <location>
        <begin position="1209"/>
        <end position="1272"/>
    </location>
</feature>
<feature type="domain" description="TSP type-1 17" evidence="3">
    <location>
        <begin position="1274"/>
        <end position="1329"/>
    </location>
</feature>
<feature type="domain" description="TSP type-1 18" evidence="3">
    <location>
        <begin position="1330"/>
        <end position="1400"/>
    </location>
</feature>
<feature type="domain" description="TSP type-1 19" evidence="3">
    <location>
        <begin position="1402"/>
        <end position="1463"/>
    </location>
</feature>
<feature type="region of interest" description="Disordered" evidence="4">
    <location>
        <begin position="255"/>
        <end position="300"/>
    </location>
</feature>
<feature type="coiled-coil region" evidence="2">
    <location>
        <begin position="256"/>
        <end position="304"/>
    </location>
</feature>
<feature type="compositionally biased region" description="Basic residues" evidence="4">
    <location>
        <begin position="258"/>
        <end position="269"/>
    </location>
</feature>
<feature type="compositionally biased region" description="Basic and acidic residues" evidence="4">
    <location>
        <begin position="270"/>
        <end position="288"/>
    </location>
</feature>
<feature type="compositionally biased region" description="Basic residues" evidence="4">
    <location>
        <begin position="289"/>
        <end position="298"/>
    </location>
</feature>
<feature type="glycosylation site" description="N-linked (GlcNAc...) asparagine" evidence="2">
    <location>
        <position position="223"/>
    </location>
</feature>
<feature type="glycosylation site" description="N-linked (GlcNAc...) asparagine" evidence="2">
    <location>
        <position position="321"/>
    </location>
</feature>
<feature type="glycosylation site" description="N-linked (GlcNAc...) asparagine" evidence="2">
    <location>
        <position position="439"/>
    </location>
</feature>
<feature type="glycosylation site" description="N-linked (GlcNAc...) asparagine" evidence="2">
    <location>
        <position position="489"/>
    </location>
</feature>
<feature type="glycosylation site" description="N-linked (GlcNAc...) asparagine" evidence="2">
    <location>
        <position position="668"/>
    </location>
</feature>
<feature type="glycosylation site" description="N-linked (GlcNAc...) asparagine" evidence="2">
    <location>
        <position position="706"/>
    </location>
</feature>
<feature type="glycosylation site" description="N-linked (GlcNAc...) asparagine" evidence="2">
    <location>
        <position position="957"/>
    </location>
</feature>
<feature type="glycosylation site" description="N-linked (GlcNAc...) asparagine" evidence="2">
    <location>
        <position position="1032"/>
    </location>
</feature>
<feature type="glycosylation site" description="N-linked (GlcNAc...) asparagine" evidence="2">
    <location>
        <position position="1213"/>
    </location>
</feature>
<feature type="glycosylation site" description="N-linked (GlcNAc...) asparagine" evidence="2">
    <location>
        <position position="1264"/>
    </location>
</feature>
<feature type="glycosylation site" description="N-linked (GlcNAc...) asparagine" evidence="2">
    <location>
        <position position="1354"/>
    </location>
</feature>
<feature type="glycosylation site" description="N-linked (GlcNAc...) asparagine" evidence="2">
    <location>
        <position position="1488"/>
    </location>
</feature>
<feature type="glycosylation site" description="N-linked (GlcNAc...) asparagine" evidence="2">
    <location>
        <position position="1535"/>
    </location>
</feature>
<feature type="disulfide bond" evidence="3">
    <location>
        <begin position="424"/>
        <end position="494"/>
    </location>
</feature>
<feature type="disulfide bond" evidence="3">
    <location>
        <begin position="444"/>
        <end position="498"/>
    </location>
</feature>
<feature type="disulfide bond" evidence="3">
    <location>
        <begin position="455"/>
        <end position="483"/>
    </location>
</feature>
<feature type="disulfide bond" evidence="3">
    <location>
        <begin position="624"/>
        <end position="666"/>
    </location>
</feature>
<feature type="disulfide bond" evidence="3">
    <location>
        <begin position="635"/>
        <end position="639"/>
    </location>
</feature>
<feature type="disulfide bond" evidence="3">
    <location>
        <begin position="678"/>
        <end position="683"/>
    </location>
</feature>
<feature type="disulfide bond" evidence="3">
    <location>
        <begin position="696"/>
        <end position="753"/>
    </location>
</feature>
<feature type="disulfide bond" evidence="3">
    <location>
        <begin position="717"/>
        <end position="757"/>
    </location>
</feature>
<feature type="disulfide bond" evidence="3">
    <location>
        <begin position="728"/>
        <end position="741"/>
    </location>
</feature>
<feature type="disulfide bond" evidence="3">
    <location>
        <begin position="761"/>
        <end position="803"/>
    </location>
</feature>
<feature type="disulfide bond" evidence="3">
    <location>
        <begin position="772"/>
        <end position="776"/>
    </location>
</feature>
<feature type="disulfide bond" evidence="3">
    <location>
        <begin position="813"/>
        <end position="819"/>
    </location>
</feature>
<feature type="disulfide bond" evidence="3">
    <location>
        <begin position="961"/>
        <end position="1017"/>
    </location>
</feature>
<feature type="disulfide bond" evidence="3">
    <location>
        <begin position="983"/>
        <end position="1021"/>
    </location>
</feature>
<feature type="disulfide bond" evidence="3">
    <location>
        <begin position="994"/>
        <end position="1007"/>
    </location>
</feature>
<feature type="disulfide bond" evidence="3">
    <location>
        <begin position="1025"/>
        <end position="1062"/>
    </location>
</feature>
<feature type="disulfide bond" evidence="3">
    <location>
        <begin position="1036"/>
        <end position="1040"/>
    </location>
</feature>
<feature type="disulfide bond" evidence="3">
    <location>
        <begin position="1079"/>
        <end position="1083"/>
    </location>
</feature>
<feature type="disulfide bond" evidence="3">
    <location>
        <begin position="1201"/>
        <end position="1207"/>
    </location>
</feature>
<feature type="disulfide bond" evidence="3">
    <location>
        <begin position="1220"/>
        <end position="1267"/>
    </location>
</feature>
<feature type="disulfide bond" evidence="3">
    <location>
        <begin position="1228"/>
        <end position="1271"/>
    </location>
</feature>
<feature type="disulfide bond" evidence="3">
    <location>
        <begin position="1239"/>
        <end position="1252"/>
    </location>
</feature>
<feature type="disulfide bond" evidence="3">
    <location>
        <begin position="1275"/>
        <end position="1313"/>
    </location>
</feature>
<feature type="disulfide bond" evidence="3">
    <location>
        <begin position="1286"/>
        <end position="1290"/>
    </location>
</feature>
<feature type="disulfide bond" evidence="3">
    <location>
        <begin position="1323"/>
        <end position="1328"/>
    </location>
</feature>
<feature type="disulfide bond" evidence="3">
    <location>
        <begin position="1339"/>
        <end position="1395"/>
    </location>
</feature>
<feature type="disulfide bond" evidence="3">
    <location>
        <begin position="1346"/>
        <end position="1399"/>
    </location>
</feature>
<feature type="disulfide bond" evidence="3">
    <location>
        <begin position="1357"/>
        <end position="1376"/>
    </location>
</feature>
<feature type="disulfide bond" evidence="3">
    <location>
        <begin position="1403"/>
        <end position="1447"/>
    </location>
</feature>
<feature type="disulfide bond" evidence="3">
    <location>
        <begin position="1414"/>
        <end position="1418"/>
    </location>
</feature>
<feature type="disulfide bond" evidence="3">
    <location>
        <begin position="1457"/>
        <end position="1462"/>
    </location>
</feature>
<feature type="sequence conflict" description="In Ref. 2." evidence="6" ref="2">
    <original>GEEVDRQLCRDAIF</original>
    <variation>ASKIVSSCGSVAAQ</variation>
    <location>
        <begin position="597"/>
        <end position="610"/>
    </location>
</feature>
<comment type="function">
    <molecule>Thrombospondin type-1 domain-containing protein 7A</molecule>
    <text evidence="5">Plays a role in actin cytoskeleton rearrangement.</text>
</comment>
<comment type="function">
    <molecule>Thrombospondin type-1 domain-containing protein 7A, soluble form</molecule>
    <text evidence="1">The soluble form promotes endothelial cell migration and filopodia formation during sprouting angiogenesis via a FAK-dependent mechanism.</text>
</comment>
<comment type="subcellular location">
    <molecule>Thrombospondin type-1 domain-containing protein 7A</molecule>
    <subcellularLocation>
        <location evidence="5">Cell membrane</location>
        <topology evidence="7">Single-pass type I membrane protein</topology>
    </subcellularLocation>
    <subcellularLocation>
        <location evidence="5">Cell projection</location>
    </subcellularLocation>
    <text evidence="5">Detected on podocyte foot processes.</text>
</comment>
<comment type="subcellular location">
    <molecule>Thrombospondin type-1 domain-containing protein 7A, soluble form</molecule>
    <subcellularLocation>
        <location evidence="1">Secreted</location>
    </subcellularLocation>
    <text evidence="1">Proteolytic cleavage in the extracellular region generates a 210 kDa soluble form.</text>
</comment>
<comment type="tissue specificity">
    <text evidence="5">Detected on kidney podocytes along the glomerular capillary wall (at protein level).</text>
</comment>
<comment type="domain">
    <text evidence="1">Sequence analysis combined with the expression of constructs corresponding each to two or three adjacent TSP type-1 domains suggests the presence of 21 TSP type-1 domains; not all of these are detected by standard bioinformatic tools.</text>
</comment>
<comment type="PTM">
    <text evidence="1">Proteolytic cleavage in the extracellular region generates a 210 kDa soluble form.</text>
</comment>
<comment type="PTM">
    <text evidence="1">Extensively N-glycosylated.</text>
</comment>
<accession>Q69ZU6</accession>
<accession>Q3TP01</accession>
<accession>Q3UWV1</accession>
<gene>
    <name type="primary">Thsd7a</name>
    <name type="synonym">Gm837</name>
    <name type="synonym">Kiaa0960</name>
</gene>
<keyword id="KW-0037">Angiogenesis</keyword>
<keyword id="KW-1003">Cell membrane</keyword>
<keyword id="KW-0966">Cell projection</keyword>
<keyword id="KW-0175">Coiled coil</keyword>
<keyword id="KW-0221">Differentiation</keyword>
<keyword id="KW-1015">Disulfide bond</keyword>
<keyword id="KW-0325">Glycoprotein</keyword>
<keyword id="KW-0472">Membrane</keyword>
<keyword id="KW-1185">Reference proteome</keyword>
<keyword id="KW-0677">Repeat</keyword>
<keyword id="KW-0964">Secreted</keyword>
<keyword id="KW-0732">Signal</keyword>
<keyword id="KW-0812">Transmembrane</keyword>
<keyword id="KW-1133">Transmembrane helix</keyword>
<dbReference type="EMBL" id="AK173072">
    <property type="protein sequence ID" value="BAD32350.1"/>
    <property type="molecule type" value="Transcribed_RNA"/>
</dbReference>
<dbReference type="EMBL" id="AK136087">
    <property type="protein sequence ID" value="BAE22813.1"/>
    <property type="molecule type" value="mRNA"/>
</dbReference>
<dbReference type="EMBL" id="AK164834">
    <property type="protein sequence ID" value="BAE37936.1"/>
    <property type="molecule type" value="mRNA"/>
</dbReference>
<dbReference type="RefSeq" id="NP_001158277.1">
    <property type="nucleotide sequence ID" value="NM_001164805.1"/>
</dbReference>
<dbReference type="SMR" id="Q69ZU6"/>
<dbReference type="BioGRID" id="236931">
    <property type="interactions" value="2"/>
</dbReference>
<dbReference type="FunCoup" id="Q69ZU6">
    <property type="interactions" value="663"/>
</dbReference>
<dbReference type="IntAct" id="Q69ZU6">
    <property type="interactions" value="3"/>
</dbReference>
<dbReference type="MINT" id="Q69ZU6"/>
<dbReference type="STRING" id="10090.ENSMUSP00000113681"/>
<dbReference type="GlyConnect" id="2767">
    <property type="glycosylation" value="10 N-Linked glycans (4 sites)"/>
</dbReference>
<dbReference type="GlyCosmos" id="Q69ZU6">
    <property type="glycosylation" value="13 sites, 10 glycans"/>
</dbReference>
<dbReference type="GlyGen" id="Q69ZU6">
    <property type="glycosylation" value="14 sites, 16 N-linked glycans (8 sites), 1 O-linked glycan (1 site)"/>
</dbReference>
<dbReference type="iPTMnet" id="Q69ZU6"/>
<dbReference type="PhosphoSitePlus" id="Q69ZU6"/>
<dbReference type="PaxDb" id="10090-ENSMUSP00000040176"/>
<dbReference type="ProteomicsDB" id="259386"/>
<dbReference type="Pumba" id="Q69ZU6"/>
<dbReference type="DNASU" id="330267"/>
<dbReference type="GeneID" id="330267"/>
<dbReference type="KEGG" id="mmu:330267"/>
<dbReference type="AGR" id="MGI:2685683"/>
<dbReference type="CTD" id="221981"/>
<dbReference type="MGI" id="MGI:2685683">
    <property type="gene designation" value="Thsd7a"/>
</dbReference>
<dbReference type="eggNOG" id="KOG3538">
    <property type="taxonomic scope" value="Eukaryota"/>
</dbReference>
<dbReference type="InParanoid" id="Q69ZU6"/>
<dbReference type="OrthoDB" id="14793at9989"/>
<dbReference type="PhylomeDB" id="Q69ZU6"/>
<dbReference type="Reactome" id="R-MMU-5173214">
    <property type="pathway name" value="O-glycosylation of TSR domain-containing proteins"/>
</dbReference>
<dbReference type="BioGRID-ORCS" id="330267">
    <property type="hits" value="1 hit in 75 CRISPR screens"/>
</dbReference>
<dbReference type="CD-CODE" id="CE726F99">
    <property type="entry name" value="Postsynaptic density"/>
</dbReference>
<dbReference type="ChiTaRS" id="Thsd7a">
    <property type="organism name" value="mouse"/>
</dbReference>
<dbReference type="PRO" id="PR:Q69ZU6"/>
<dbReference type="Proteomes" id="UP000000589">
    <property type="component" value="Unplaced"/>
</dbReference>
<dbReference type="RNAct" id="Q69ZU6">
    <property type="molecule type" value="protein"/>
</dbReference>
<dbReference type="GO" id="GO:0005576">
    <property type="term" value="C:extracellular region"/>
    <property type="evidence" value="ECO:0007669"/>
    <property type="project" value="UniProtKB-SubCell"/>
</dbReference>
<dbReference type="GO" id="GO:0005886">
    <property type="term" value="C:plasma membrane"/>
    <property type="evidence" value="ECO:0000314"/>
    <property type="project" value="UniProtKB"/>
</dbReference>
<dbReference type="GO" id="GO:0098846">
    <property type="term" value="C:podocyte foot"/>
    <property type="evidence" value="ECO:0000314"/>
    <property type="project" value="UniProtKB"/>
</dbReference>
<dbReference type="GO" id="GO:0030036">
    <property type="term" value="P:actin cytoskeleton organization"/>
    <property type="evidence" value="ECO:0000315"/>
    <property type="project" value="UniProtKB"/>
</dbReference>
<dbReference type="GO" id="GO:0001525">
    <property type="term" value="P:angiogenesis"/>
    <property type="evidence" value="ECO:0007669"/>
    <property type="project" value="UniProtKB-KW"/>
</dbReference>
<dbReference type="GO" id="GO:0030154">
    <property type="term" value="P:cell differentiation"/>
    <property type="evidence" value="ECO:0007669"/>
    <property type="project" value="UniProtKB-KW"/>
</dbReference>
<dbReference type="FunFam" id="2.20.100.10:FF:000014">
    <property type="entry name" value="Thrombospondin type 1 domain containing 7A"/>
    <property type="match status" value="1"/>
</dbReference>
<dbReference type="FunFam" id="2.20.100.10:FF:000017">
    <property type="entry name" value="Thrombospondin type 1 domain containing 7A"/>
    <property type="match status" value="1"/>
</dbReference>
<dbReference type="FunFam" id="2.20.100.10:FF:000018">
    <property type="entry name" value="Thrombospondin type 1 domain containing 7A"/>
    <property type="match status" value="1"/>
</dbReference>
<dbReference type="FunFam" id="2.20.100.10:FF:000019">
    <property type="entry name" value="Thrombospondin type 1 domain containing 7A"/>
    <property type="match status" value="1"/>
</dbReference>
<dbReference type="FunFam" id="2.20.100.10:FF:000020">
    <property type="entry name" value="Thrombospondin type 1 domain containing 7A"/>
    <property type="match status" value="1"/>
</dbReference>
<dbReference type="FunFam" id="2.20.100.10:FF:000027">
    <property type="entry name" value="Thrombospondin type 1 domain containing 7A"/>
    <property type="match status" value="1"/>
</dbReference>
<dbReference type="FunFam" id="2.20.100.10:FF:000031">
    <property type="entry name" value="Thrombospondin type 1 domain containing 7A"/>
    <property type="match status" value="1"/>
</dbReference>
<dbReference type="FunFam" id="2.20.100.10:FF:000050">
    <property type="entry name" value="Thrombospondin type 1 domain containing 7B"/>
    <property type="match status" value="1"/>
</dbReference>
<dbReference type="FunFam" id="2.20.100.10:FF:000015">
    <property type="entry name" value="Thrombospondin, type I, domain containing 7A"/>
    <property type="match status" value="1"/>
</dbReference>
<dbReference type="Gene3D" id="2.20.100.10">
    <property type="entry name" value="Thrombospondin type-1 (TSP1) repeat"/>
    <property type="match status" value="11"/>
</dbReference>
<dbReference type="InterPro" id="IPR051418">
    <property type="entry name" value="Spondin/Thrombospondin_T1"/>
</dbReference>
<dbReference type="InterPro" id="IPR000884">
    <property type="entry name" value="TSP1_rpt"/>
</dbReference>
<dbReference type="InterPro" id="IPR036383">
    <property type="entry name" value="TSP1_rpt_sf"/>
</dbReference>
<dbReference type="InterPro" id="IPR044004">
    <property type="entry name" value="TSP1_spondin_dom"/>
</dbReference>
<dbReference type="InterPro" id="IPR056991">
    <property type="entry name" value="TSP1_TSH7A-B_C"/>
</dbReference>
<dbReference type="PANTHER" id="PTHR11311">
    <property type="entry name" value="SPONDIN"/>
    <property type="match status" value="1"/>
</dbReference>
<dbReference type="PANTHER" id="PTHR11311:SF8">
    <property type="entry name" value="THROMBOSPONDIN TYPE-1 DOMAIN-CONTAINING PROTEIN 7A"/>
    <property type="match status" value="1"/>
</dbReference>
<dbReference type="Pfam" id="PF19030">
    <property type="entry name" value="TSP1_ADAMTS"/>
    <property type="match status" value="3"/>
</dbReference>
<dbReference type="Pfam" id="PF19028">
    <property type="entry name" value="TSP1_spondin"/>
    <property type="match status" value="6"/>
</dbReference>
<dbReference type="Pfam" id="PF23308">
    <property type="entry name" value="TSP1_TSH7A-B_C"/>
    <property type="match status" value="1"/>
</dbReference>
<dbReference type="Pfam" id="PF00090">
    <property type="entry name" value="TSP_1"/>
    <property type="match status" value="2"/>
</dbReference>
<dbReference type="SMART" id="SM00209">
    <property type="entry name" value="TSP1"/>
    <property type="match status" value="16"/>
</dbReference>
<dbReference type="SUPFAM" id="SSF82895">
    <property type="entry name" value="TSP-1 type 1 repeat"/>
    <property type="match status" value="10"/>
</dbReference>
<dbReference type="PROSITE" id="PS50092">
    <property type="entry name" value="TSP1"/>
    <property type="match status" value="11"/>
</dbReference>
<reference key="1">
    <citation type="journal article" date="2004" name="DNA Res.">
        <title>Prediction of the coding sequences of mouse homologues of KIAA gene: IV. The complete nucleotide sequences of 500 mouse KIAA-homologous cDNAs identified by screening of terminal sequences of cDNA clones randomly sampled from size-fractionated libraries.</title>
        <authorList>
            <person name="Okazaki N."/>
            <person name="Kikuno R."/>
            <person name="Ohara R."/>
            <person name="Inamoto S."/>
            <person name="Koseki H."/>
            <person name="Hiraoka S."/>
            <person name="Saga Y."/>
            <person name="Seino S."/>
            <person name="Nishimura M."/>
            <person name="Kaisho T."/>
            <person name="Hoshino K."/>
            <person name="Kitamura H."/>
            <person name="Nagase T."/>
            <person name="Ohara O."/>
            <person name="Koga H."/>
        </authorList>
    </citation>
    <scope>NUCLEOTIDE SEQUENCE [LARGE SCALE MRNA]</scope>
    <source>
        <tissue>Brain</tissue>
    </source>
</reference>
<reference key="2">
    <citation type="journal article" date="2005" name="Science">
        <title>The transcriptional landscape of the mammalian genome.</title>
        <authorList>
            <person name="Carninci P."/>
            <person name="Kasukawa T."/>
            <person name="Katayama S."/>
            <person name="Gough J."/>
            <person name="Frith M.C."/>
            <person name="Maeda N."/>
            <person name="Oyama R."/>
            <person name="Ravasi T."/>
            <person name="Lenhard B."/>
            <person name="Wells C."/>
            <person name="Kodzius R."/>
            <person name="Shimokawa K."/>
            <person name="Bajic V.B."/>
            <person name="Brenner S.E."/>
            <person name="Batalov S."/>
            <person name="Forrest A.R."/>
            <person name="Zavolan M."/>
            <person name="Davis M.J."/>
            <person name="Wilming L.G."/>
            <person name="Aidinis V."/>
            <person name="Allen J.E."/>
            <person name="Ambesi-Impiombato A."/>
            <person name="Apweiler R."/>
            <person name="Aturaliya R.N."/>
            <person name="Bailey T.L."/>
            <person name="Bansal M."/>
            <person name="Baxter L."/>
            <person name="Beisel K.W."/>
            <person name="Bersano T."/>
            <person name="Bono H."/>
            <person name="Chalk A.M."/>
            <person name="Chiu K.P."/>
            <person name="Choudhary V."/>
            <person name="Christoffels A."/>
            <person name="Clutterbuck D.R."/>
            <person name="Crowe M.L."/>
            <person name="Dalla E."/>
            <person name="Dalrymple B.P."/>
            <person name="de Bono B."/>
            <person name="Della Gatta G."/>
            <person name="di Bernardo D."/>
            <person name="Down T."/>
            <person name="Engstrom P."/>
            <person name="Fagiolini M."/>
            <person name="Faulkner G."/>
            <person name="Fletcher C.F."/>
            <person name="Fukushima T."/>
            <person name="Furuno M."/>
            <person name="Futaki S."/>
            <person name="Gariboldi M."/>
            <person name="Georgii-Hemming P."/>
            <person name="Gingeras T.R."/>
            <person name="Gojobori T."/>
            <person name="Green R.E."/>
            <person name="Gustincich S."/>
            <person name="Harbers M."/>
            <person name="Hayashi Y."/>
            <person name="Hensch T.K."/>
            <person name="Hirokawa N."/>
            <person name="Hill D."/>
            <person name="Huminiecki L."/>
            <person name="Iacono M."/>
            <person name="Ikeo K."/>
            <person name="Iwama A."/>
            <person name="Ishikawa T."/>
            <person name="Jakt M."/>
            <person name="Kanapin A."/>
            <person name="Katoh M."/>
            <person name="Kawasawa Y."/>
            <person name="Kelso J."/>
            <person name="Kitamura H."/>
            <person name="Kitano H."/>
            <person name="Kollias G."/>
            <person name="Krishnan S.P."/>
            <person name="Kruger A."/>
            <person name="Kummerfeld S.K."/>
            <person name="Kurochkin I.V."/>
            <person name="Lareau L.F."/>
            <person name="Lazarevic D."/>
            <person name="Lipovich L."/>
            <person name="Liu J."/>
            <person name="Liuni S."/>
            <person name="McWilliam S."/>
            <person name="Madan Babu M."/>
            <person name="Madera M."/>
            <person name="Marchionni L."/>
            <person name="Matsuda H."/>
            <person name="Matsuzawa S."/>
            <person name="Miki H."/>
            <person name="Mignone F."/>
            <person name="Miyake S."/>
            <person name="Morris K."/>
            <person name="Mottagui-Tabar S."/>
            <person name="Mulder N."/>
            <person name="Nakano N."/>
            <person name="Nakauchi H."/>
            <person name="Ng P."/>
            <person name="Nilsson R."/>
            <person name="Nishiguchi S."/>
            <person name="Nishikawa S."/>
            <person name="Nori F."/>
            <person name="Ohara O."/>
            <person name="Okazaki Y."/>
            <person name="Orlando V."/>
            <person name="Pang K.C."/>
            <person name="Pavan W.J."/>
            <person name="Pavesi G."/>
            <person name="Pesole G."/>
            <person name="Petrovsky N."/>
            <person name="Piazza S."/>
            <person name="Reed J."/>
            <person name="Reid J.F."/>
            <person name="Ring B.Z."/>
            <person name="Ringwald M."/>
            <person name="Rost B."/>
            <person name="Ruan Y."/>
            <person name="Salzberg S.L."/>
            <person name="Sandelin A."/>
            <person name="Schneider C."/>
            <person name="Schoenbach C."/>
            <person name="Sekiguchi K."/>
            <person name="Semple C.A."/>
            <person name="Seno S."/>
            <person name="Sessa L."/>
            <person name="Sheng Y."/>
            <person name="Shibata Y."/>
            <person name="Shimada H."/>
            <person name="Shimada K."/>
            <person name="Silva D."/>
            <person name="Sinclair B."/>
            <person name="Sperling S."/>
            <person name="Stupka E."/>
            <person name="Sugiura K."/>
            <person name="Sultana R."/>
            <person name="Takenaka Y."/>
            <person name="Taki K."/>
            <person name="Tammoja K."/>
            <person name="Tan S.L."/>
            <person name="Tang S."/>
            <person name="Taylor M.S."/>
            <person name="Tegner J."/>
            <person name="Teichmann S.A."/>
            <person name="Ueda H.R."/>
            <person name="van Nimwegen E."/>
            <person name="Verardo R."/>
            <person name="Wei C.L."/>
            <person name="Yagi K."/>
            <person name="Yamanishi H."/>
            <person name="Zabarovsky E."/>
            <person name="Zhu S."/>
            <person name="Zimmer A."/>
            <person name="Hide W."/>
            <person name="Bult C."/>
            <person name="Grimmond S.M."/>
            <person name="Teasdale R.D."/>
            <person name="Liu E.T."/>
            <person name="Brusic V."/>
            <person name="Quackenbush J."/>
            <person name="Wahlestedt C."/>
            <person name="Mattick J.S."/>
            <person name="Hume D.A."/>
            <person name="Kai C."/>
            <person name="Sasaki D."/>
            <person name="Tomaru Y."/>
            <person name="Fukuda S."/>
            <person name="Kanamori-Katayama M."/>
            <person name="Suzuki M."/>
            <person name="Aoki J."/>
            <person name="Arakawa T."/>
            <person name="Iida J."/>
            <person name="Imamura K."/>
            <person name="Itoh M."/>
            <person name="Kato T."/>
            <person name="Kawaji H."/>
            <person name="Kawagashira N."/>
            <person name="Kawashima T."/>
            <person name="Kojima M."/>
            <person name="Kondo S."/>
            <person name="Konno H."/>
            <person name="Nakano K."/>
            <person name="Ninomiya N."/>
            <person name="Nishio T."/>
            <person name="Okada M."/>
            <person name="Plessy C."/>
            <person name="Shibata K."/>
            <person name="Shiraki T."/>
            <person name="Suzuki S."/>
            <person name="Tagami M."/>
            <person name="Waki K."/>
            <person name="Watahiki A."/>
            <person name="Okamura-Oho Y."/>
            <person name="Suzuki H."/>
            <person name="Kawai J."/>
            <person name="Hayashizaki Y."/>
        </authorList>
    </citation>
    <scope>NUCLEOTIDE SEQUENCE [LARGE SCALE MRNA] OF 258-610 AND 1603-1645</scope>
    <source>
        <strain>C57BL/6J</strain>
        <tissue>Egg</tissue>
        <tissue>Head</tissue>
    </source>
</reference>
<reference key="3">
    <citation type="journal article" date="2010" name="Cell">
        <title>A tissue-specific atlas of mouse protein phosphorylation and expression.</title>
        <authorList>
            <person name="Huttlin E.L."/>
            <person name="Jedrychowski M.P."/>
            <person name="Elias J.E."/>
            <person name="Goswami T."/>
            <person name="Rad R."/>
            <person name="Beausoleil S.A."/>
            <person name="Villen J."/>
            <person name="Haas W."/>
            <person name="Sowa M.E."/>
            <person name="Gygi S.P."/>
        </authorList>
    </citation>
    <scope>IDENTIFICATION BY MASS SPECTROMETRY [LARGE SCALE ANALYSIS]</scope>
    <source>
        <tissue>Brain</tissue>
        <tissue>Kidney</tissue>
    </source>
</reference>
<reference key="4">
    <citation type="journal article" date="2016" name="J. Clin. Invest.">
        <title>Autoantibodies against thrombospondin type 1 domain-containing 7A induce membranous nephropathy.</title>
        <authorList>
            <person name="Tomas N.M."/>
            <person name="Hoxha E."/>
            <person name="Reinicke A.T."/>
            <person name="Fester L."/>
            <person name="Helmchen U."/>
            <person name="Gerth J."/>
            <person name="Bachmann F."/>
            <person name="Budde K."/>
            <person name="Koch-Nolte F."/>
            <person name="Zahner G."/>
            <person name="Rune G."/>
            <person name="Lambeau G."/>
            <person name="Meyer-Schwesinger C."/>
            <person name="Stahl R.A."/>
        </authorList>
    </citation>
    <scope>FUNCTION</scope>
    <scope>SUBCELLULAR LOCATION</scope>
    <scope>TISSUE SPECIFICITY</scope>
</reference>